<name>TRMD_LISMC</name>
<feature type="chain" id="PRO_1000212228" description="tRNA (guanine-N(1)-)-methyltransferase">
    <location>
        <begin position="1"/>
        <end position="245"/>
    </location>
</feature>
<feature type="binding site" evidence="1">
    <location>
        <position position="114"/>
    </location>
    <ligand>
        <name>S-adenosyl-L-methionine</name>
        <dbReference type="ChEBI" id="CHEBI:59789"/>
    </ligand>
</feature>
<feature type="binding site" evidence="1">
    <location>
        <begin position="134"/>
        <end position="139"/>
    </location>
    <ligand>
        <name>S-adenosyl-L-methionine</name>
        <dbReference type="ChEBI" id="CHEBI:59789"/>
    </ligand>
</feature>
<dbReference type="EC" id="2.1.1.228" evidence="1"/>
<dbReference type="EMBL" id="FM242711">
    <property type="protein sequence ID" value="CAS05566.1"/>
    <property type="molecule type" value="Genomic_DNA"/>
</dbReference>
<dbReference type="RefSeq" id="WP_003726803.1">
    <property type="nucleotide sequence ID" value="NC_012488.1"/>
</dbReference>
<dbReference type="SMR" id="C1KW91"/>
<dbReference type="KEGG" id="lmc:Lm4b_01808"/>
<dbReference type="HOGENOM" id="CLU_047363_0_1_9"/>
<dbReference type="GO" id="GO:0005829">
    <property type="term" value="C:cytosol"/>
    <property type="evidence" value="ECO:0007669"/>
    <property type="project" value="TreeGrafter"/>
</dbReference>
<dbReference type="GO" id="GO:0052906">
    <property type="term" value="F:tRNA (guanine(37)-N1)-methyltransferase activity"/>
    <property type="evidence" value="ECO:0007669"/>
    <property type="project" value="UniProtKB-UniRule"/>
</dbReference>
<dbReference type="GO" id="GO:0002939">
    <property type="term" value="P:tRNA N1-guanine methylation"/>
    <property type="evidence" value="ECO:0007669"/>
    <property type="project" value="TreeGrafter"/>
</dbReference>
<dbReference type="CDD" id="cd18080">
    <property type="entry name" value="TrmD-like"/>
    <property type="match status" value="1"/>
</dbReference>
<dbReference type="FunFam" id="1.10.1270.20:FF:000001">
    <property type="entry name" value="tRNA (guanine-N(1)-)-methyltransferase"/>
    <property type="match status" value="1"/>
</dbReference>
<dbReference type="FunFam" id="3.40.1280.10:FF:000001">
    <property type="entry name" value="tRNA (guanine-N(1)-)-methyltransferase"/>
    <property type="match status" value="1"/>
</dbReference>
<dbReference type="Gene3D" id="3.40.1280.10">
    <property type="match status" value="1"/>
</dbReference>
<dbReference type="Gene3D" id="1.10.1270.20">
    <property type="entry name" value="tRNA(m1g37)methyltransferase, domain 2"/>
    <property type="match status" value="1"/>
</dbReference>
<dbReference type="HAMAP" id="MF_00605">
    <property type="entry name" value="TrmD"/>
    <property type="match status" value="1"/>
</dbReference>
<dbReference type="InterPro" id="IPR029028">
    <property type="entry name" value="Alpha/beta_knot_MTases"/>
</dbReference>
<dbReference type="InterPro" id="IPR023148">
    <property type="entry name" value="tRNA_m1G_MeTrfase_C_sf"/>
</dbReference>
<dbReference type="InterPro" id="IPR002649">
    <property type="entry name" value="tRNA_m1G_MeTrfase_TrmD"/>
</dbReference>
<dbReference type="InterPro" id="IPR029026">
    <property type="entry name" value="tRNA_m1G_MTases_N"/>
</dbReference>
<dbReference type="InterPro" id="IPR016009">
    <property type="entry name" value="tRNA_MeTrfase_TRMD/TRM10"/>
</dbReference>
<dbReference type="NCBIfam" id="NF000648">
    <property type="entry name" value="PRK00026.1"/>
    <property type="match status" value="1"/>
</dbReference>
<dbReference type="NCBIfam" id="TIGR00088">
    <property type="entry name" value="trmD"/>
    <property type="match status" value="1"/>
</dbReference>
<dbReference type="PANTHER" id="PTHR46417">
    <property type="entry name" value="TRNA (GUANINE-N(1)-)-METHYLTRANSFERASE"/>
    <property type="match status" value="1"/>
</dbReference>
<dbReference type="PANTHER" id="PTHR46417:SF1">
    <property type="entry name" value="TRNA (GUANINE-N(1)-)-METHYLTRANSFERASE"/>
    <property type="match status" value="1"/>
</dbReference>
<dbReference type="Pfam" id="PF01746">
    <property type="entry name" value="tRNA_m1G_MT"/>
    <property type="match status" value="1"/>
</dbReference>
<dbReference type="PIRSF" id="PIRSF000386">
    <property type="entry name" value="tRNA_mtase"/>
    <property type="match status" value="1"/>
</dbReference>
<dbReference type="SUPFAM" id="SSF75217">
    <property type="entry name" value="alpha/beta knot"/>
    <property type="match status" value="1"/>
</dbReference>
<protein>
    <recommendedName>
        <fullName evidence="1">tRNA (guanine-N(1)-)-methyltransferase</fullName>
        <ecNumber evidence="1">2.1.1.228</ecNumber>
    </recommendedName>
    <alternativeName>
        <fullName evidence="1">M1G-methyltransferase</fullName>
    </alternativeName>
    <alternativeName>
        <fullName evidence="1">tRNA [GM37] methyltransferase</fullName>
    </alternativeName>
</protein>
<comment type="function">
    <text evidence="1">Specifically methylates guanosine-37 in various tRNAs.</text>
</comment>
<comment type="catalytic activity">
    <reaction evidence="1">
        <text>guanosine(37) in tRNA + S-adenosyl-L-methionine = N(1)-methylguanosine(37) in tRNA + S-adenosyl-L-homocysteine + H(+)</text>
        <dbReference type="Rhea" id="RHEA:36899"/>
        <dbReference type="Rhea" id="RHEA-COMP:10145"/>
        <dbReference type="Rhea" id="RHEA-COMP:10147"/>
        <dbReference type="ChEBI" id="CHEBI:15378"/>
        <dbReference type="ChEBI" id="CHEBI:57856"/>
        <dbReference type="ChEBI" id="CHEBI:59789"/>
        <dbReference type="ChEBI" id="CHEBI:73542"/>
        <dbReference type="ChEBI" id="CHEBI:74269"/>
        <dbReference type="EC" id="2.1.1.228"/>
    </reaction>
</comment>
<comment type="subunit">
    <text evidence="1">Homodimer.</text>
</comment>
<comment type="subcellular location">
    <subcellularLocation>
        <location evidence="1">Cytoplasm</location>
    </subcellularLocation>
</comment>
<comment type="similarity">
    <text evidence="1">Belongs to the RNA methyltransferase TrmD family.</text>
</comment>
<keyword id="KW-0963">Cytoplasm</keyword>
<keyword id="KW-0489">Methyltransferase</keyword>
<keyword id="KW-0949">S-adenosyl-L-methionine</keyword>
<keyword id="KW-0808">Transferase</keyword>
<keyword id="KW-0819">tRNA processing</keyword>
<reference key="1">
    <citation type="journal article" date="2012" name="BMC Genomics">
        <title>Comparative genomics and transcriptomics of lineages I, II, and III strains of Listeria monocytogenes.</title>
        <authorList>
            <person name="Hain T."/>
            <person name="Ghai R."/>
            <person name="Billion A."/>
            <person name="Kuenne C.T."/>
            <person name="Steinweg C."/>
            <person name="Izar B."/>
            <person name="Mohamed W."/>
            <person name="Mraheil M."/>
            <person name="Domann E."/>
            <person name="Schaffrath S."/>
            <person name="Karst U."/>
            <person name="Goesmann A."/>
            <person name="Oehm S."/>
            <person name="Puhler A."/>
            <person name="Merkl R."/>
            <person name="Vorwerk S."/>
            <person name="Glaser P."/>
            <person name="Garrido P."/>
            <person name="Rusniok C."/>
            <person name="Buchrieser C."/>
            <person name="Goebel W."/>
            <person name="Chakraborty T."/>
        </authorList>
    </citation>
    <scope>NUCLEOTIDE SEQUENCE [LARGE SCALE GENOMIC DNA]</scope>
    <source>
        <strain>CLIP80459</strain>
    </source>
</reference>
<proteinExistence type="inferred from homology"/>
<accession>C1KW91</accession>
<organism>
    <name type="scientific">Listeria monocytogenes serotype 4b (strain CLIP80459)</name>
    <dbReference type="NCBI Taxonomy" id="568819"/>
    <lineage>
        <taxon>Bacteria</taxon>
        <taxon>Bacillati</taxon>
        <taxon>Bacillota</taxon>
        <taxon>Bacilli</taxon>
        <taxon>Bacillales</taxon>
        <taxon>Listeriaceae</taxon>
        <taxon>Listeria</taxon>
    </lineage>
</organism>
<evidence type="ECO:0000255" key="1">
    <source>
        <dbReference type="HAMAP-Rule" id="MF_00605"/>
    </source>
</evidence>
<gene>
    <name evidence="1" type="primary">trmD</name>
    <name type="ordered locus">Lm4b_01808</name>
</gene>
<sequence length="245" mass="27929">MKIDILSIFPDMFSGVTGNSIIKKAIENERVAVEVTDFREYAEGKHHIVDDYPYGGGAGMLLKAQPIFDAVQAVKEKQPETKPRVILMDPAGKRFDQKMAEEFAEEEHLVFICGHYEGYDERIREHLVTDEVSIGDYILTGGEIGAMIVMDSVIRLLPGVLGNKDSAVTDSFSTGLLEHPHYTRPADFRGMKVPDILLSGNHAWIEEWRDKESLKRTYERRPDLLKNYPLTDKQKTWLKEWSDSK</sequence>